<gene>
    <name evidence="1" type="primary">purM</name>
    <name type="ordered locus">gbs0026</name>
</gene>
<reference key="1">
    <citation type="journal article" date="2002" name="Mol. Microbiol.">
        <title>Genome sequence of Streptococcus agalactiae, a pathogen causing invasive neonatal disease.</title>
        <authorList>
            <person name="Glaser P."/>
            <person name="Rusniok C."/>
            <person name="Buchrieser C."/>
            <person name="Chevalier F."/>
            <person name="Frangeul L."/>
            <person name="Msadek T."/>
            <person name="Zouine M."/>
            <person name="Couve E."/>
            <person name="Lalioui L."/>
            <person name="Poyart C."/>
            <person name="Trieu-Cuot P."/>
            <person name="Kunst F."/>
        </authorList>
    </citation>
    <scope>NUCLEOTIDE SEQUENCE [LARGE SCALE GENOMIC DNA]</scope>
    <source>
        <strain>NEM316</strain>
    </source>
</reference>
<keyword id="KW-0067">ATP-binding</keyword>
<keyword id="KW-0963">Cytoplasm</keyword>
<keyword id="KW-0436">Ligase</keyword>
<keyword id="KW-0547">Nucleotide-binding</keyword>
<keyword id="KW-0658">Purine biosynthesis</keyword>
<comment type="catalytic activity">
    <reaction evidence="1">
        <text>2-formamido-N(1)-(5-O-phospho-beta-D-ribosyl)acetamidine + ATP = 5-amino-1-(5-phospho-beta-D-ribosyl)imidazole + ADP + phosphate + H(+)</text>
        <dbReference type="Rhea" id="RHEA:23032"/>
        <dbReference type="ChEBI" id="CHEBI:15378"/>
        <dbReference type="ChEBI" id="CHEBI:30616"/>
        <dbReference type="ChEBI" id="CHEBI:43474"/>
        <dbReference type="ChEBI" id="CHEBI:137981"/>
        <dbReference type="ChEBI" id="CHEBI:147287"/>
        <dbReference type="ChEBI" id="CHEBI:456216"/>
        <dbReference type="EC" id="6.3.3.1"/>
    </reaction>
</comment>
<comment type="pathway">
    <text evidence="1">Purine metabolism; IMP biosynthesis via de novo pathway; 5-amino-1-(5-phospho-D-ribosyl)imidazole from N(2)-formyl-N(1)-(5-phospho-D-ribosyl)glycinamide: step 2/2.</text>
</comment>
<comment type="subcellular location">
    <subcellularLocation>
        <location evidence="1">Cytoplasm</location>
    </subcellularLocation>
</comment>
<comment type="similarity">
    <text evidence="1">Belongs to the AIR synthase family.</text>
</comment>
<name>PUR5_STRA3</name>
<organism>
    <name type="scientific">Streptococcus agalactiae serotype III (strain NEM316)</name>
    <dbReference type="NCBI Taxonomy" id="211110"/>
    <lineage>
        <taxon>Bacteria</taxon>
        <taxon>Bacillati</taxon>
        <taxon>Bacillota</taxon>
        <taxon>Bacilli</taxon>
        <taxon>Lactobacillales</taxon>
        <taxon>Streptococcaceae</taxon>
        <taxon>Streptococcus</taxon>
    </lineage>
</organism>
<evidence type="ECO:0000255" key="1">
    <source>
        <dbReference type="HAMAP-Rule" id="MF_00741"/>
    </source>
</evidence>
<dbReference type="EC" id="6.3.3.1" evidence="1"/>
<dbReference type="EMBL" id="AL766843">
    <property type="protein sequence ID" value="CAD45671.1"/>
    <property type="molecule type" value="Genomic_DNA"/>
</dbReference>
<dbReference type="RefSeq" id="WP_001291328.1">
    <property type="nucleotide sequence ID" value="NC_004368.1"/>
</dbReference>
<dbReference type="SMR" id="Q8E7W9"/>
<dbReference type="KEGG" id="san:gbs0026"/>
<dbReference type="eggNOG" id="COG0150">
    <property type="taxonomic scope" value="Bacteria"/>
</dbReference>
<dbReference type="HOGENOM" id="CLU_047116_0_0_9"/>
<dbReference type="UniPathway" id="UPA00074">
    <property type="reaction ID" value="UER00129"/>
</dbReference>
<dbReference type="Proteomes" id="UP000000823">
    <property type="component" value="Chromosome"/>
</dbReference>
<dbReference type="GO" id="GO:0005829">
    <property type="term" value="C:cytosol"/>
    <property type="evidence" value="ECO:0007669"/>
    <property type="project" value="TreeGrafter"/>
</dbReference>
<dbReference type="GO" id="GO:0005524">
    <property type="term" value="F:ATP binding"/>
    <property type="evidence" value="ECO:0007669"/>
    <property type="project" value="UniProtKB-KW"/>
</dbReference>
<dbReference type="GO" id="GO:0004637">
    <property type="term" value="F:phosphoribosylamine-glycine ligase activity"/>
    <property type="evidence" value="ECO:0007669"/>
    <property type="project" value="TreeGrafter"/>
</dbReference>
<dbReference type="GO" id="GO:0004641">
    <property type="term" value="F:phosphoribosylformylglycinamidine cyclo-ligase activity"/>
    <property type="evidence" value="ECO:0007669"/>
    <property type="project" value="UniProtKB-UniRule"/>
</dbReference>
<dbReference type="GO" id="GO:0006189">
    <property type="term" value="P:'de novo' IMP biosynthetic process"/>
    <property type="evidence" value="ECO:0007669"/>
    <property type="project" value="UniProtKB-UniRule"/>
</dbReference>
<dbReference type="GO" id="GO:0046084">
    <property type="term" value="P:adenine biosynthetic process"/>
    <property type="evidence" value="ECO:0007669"/>
    <property type="project" value="TreeGrafter"/>
</dbReference>
<dbReference type="CDD" id="cd02196">
    <property type="entry name" value="PurM"/>
    <property type="match status" value="1"/>
</dbReference>
<dbReference type="FunFam" id="3.30.1330.10:FF:000001">
    <property type="entry name" value="Phosphoribosylformylglycinamidine cyclo-ligase"/>
    <property type="match status" value="1"/>
</dbReference>
<dbReference type="FunFam" id="3.90.650.10:FF:000011">
    <property type="entry name" value="Phosphoribosylformylglycinamidine cyclo-ligase"/>
    <property type="match status" value="1"/>
</dbReference>
<dbReference type="Gene3D" id="3.90.650.10">
    <property type="entry name" value="PurM-like C-terminal domain"/>
    <property type="match status" value="1"/>
</dbReference>
<dbReference type="Gene3D" id="3.30.1330.10">
    <property type="entry name" value="PurM-like, N-terminal domain"/>
    <property type="match status" value="1"/>
</dbReference>
<dbReference type="HAMAP" id="MF_00741">
    <property type="entry name" value="AIRS"/>
    <property type="match status" value="1"/>
</dbReference>
<dbReference type="InterPro" id="IPR010918">
    <property type="entry name" value="PurM-like_C_dom"/>
</dbReference>
<dbReference type="InterPro" id="IPR036676">
    <property type="entry name" value="PurM-like_C_sf"/>
</dbReference>
<dbReference type="InterPro" id="IPR016188">
    <property type="entry name" value="PurM-like_N"/>
</dbReference>
<dbReference type="InterPro" id="IPR036921">
    <property type="entry name" value="PurM-like_N_sf"/>
</dbReference>
<dbReference type="InterPro" id="IPR004733">
    <property type="entry name" value="PurM_cligase"/>
</dbReference>
<dbReference type="NCBIfam" id="TIGR00878">
    <property type="entry name" value="purM"/>
    <property type="match status" value="1"/>
</dbReference>
<dbReference type="PANTHER" id="PTHR10520:SF12">
    <property type="entry name" value="TRIFUNCTIONAL PURINE BIOSYNTHETIC PROTEIN ADENOSINE-3"/>
    <property type="match status" value="1"/>
</dbReference>
<dbReference type="PANTHER" id="PTHR10520">
    <property type="entry name" value="TRIFUNCTIONAL PURINE BIOSYNTHETIC PROTEIN ADENOSINE-3-RELATED"/>
    <property type="match status" value="1"/>
</dbReference>
<dbReference type="Pfam" id="PF00586">
    <property type="entry name" value="AIRS"/>
    <property type="match status" value="1"/>
</dbReference>
<dbReference type="Pfam" id="PF02769">
    <property type="entry name" value="AIRS_C"/>
    <property type="match status" value="1"/>
</dbReference>
<dbReference type="SUPFAM" id="SSF56042">
    <property type="entry name" value="PurM C-terminal domain-like"/>
    <property type="match status" value="1"/>
</dbReference>
<dbReference type="SUPFAM" id="SSF55326">
    <property type="entry name" value="PurM N-terminal domain-like"/>
    <property type="match status" value="1"/>
</dbReference>
<accession>Q8E7W9</accession>
<feature type="chain" id="PRO_0000148255" description="Phosphoribosylformylglycinamidine cyclo-ligase">
    <location>
        <begin position="1"/>
        <end position="340"/>
    </location>
</feature>
<protein>
    <recommendedName>
        <fullName evidence="1">Phosphoribosylformylglycinamidine cyclo-ligase</fullName>
        <ecNumber evidence="1">6.3.3.1</ecNumber>
    </recommendedName>
    <alternativeName>
        <fullName evidence="1">AIR synthase</fullName>
    </alternativeName>
    <alternativeName>
        <fullName evidence="1">AIRS</fullName>
    </alternativeName>
    <alternativeName>
        <fullName evidence="1">Phosphoribosyl-aminoimidazole synthetase</fullName>
    </alternativeName>
</protein>
<sequence>MSEKNAYAKSGVDVEAGYEVVERIKKHVARTERAGVMGALGGFGGMFDLSQTGVKEPVLISGTDGVGTKLMLAIKYDKHDTIGQDCVAMCVNDIIAAGAEPLYFLDYVATGKNEPAKLEQVVAGVAEGCVQAGAALIGGETAEMPGMYGEDDYDLAGFAVGVAEKSQIIDGSKVKEGDILLGLASSGIHSNGYSLVRRVFADYTGDEVLPELEGKQLKDVLLEPTRIYVKAALPLIKEELVNGIAHITGGGFIENVPRMFADDLAAEIDEDKVPVLPIFKALEKYGDIKHEEMFEIFNMGVGLMLAVSPENVNRVKELLDEPVYEIGRIIKKADASVVIK</sequence>
<proteinExistence type="inferred from homology"/>